<protein>
    <recommendedName>
        <fullName evidence="1">Ribonuclease Y</fullName>
        <shortName evidence="1">RNase Y</shortName>
        <ecNumber evidence="1">3.1.-.-</ecNumber>
    </recommendedName>
</protein>
<proteinExistence type="inferred from homology"/>
<organism>
    <name type="scientific">Geobacter metallireducens (strain ATCC 53774 / DSM 7210 / GS-15)</name>
    <dbReference type="NCBI Taxonomy" id="269799"/>
    <lineage>
        <taxon>Bacteria</taxon>
        <taxon>Pseudomonadati</taxon>
        <taxon>Thermodesulfobacteriota</taxon>
        <taxon>Desulfuromonadia</taxon>
        <taxon>Geobacterales</taxon>
        <taxon>Geobacteraceae</taxon>
        <taxon>Geobacter</taxon>
    </lineage>
</organism>
<dbReference type="EC" id="3.1.-.-" evidence="1"/>
<dbReference type="EMBL" id="CP000148">
    <property type="protein sequence ID" value="ABB31418.1"/>
    <property type="molecule type" value="Genomic_DNA"/>
</dbReference>
<dbReference type="RefSeq" id="WP_004513446.1">
    <property type="nucleotide sequence ID" value="NC_007517.1"/>
</dbReference>
<dbReference type="SMR" id="Q39WF6"/>
<dbReference type="STRING" id="269799.Gmet_1180"/>
<dbReference type="KEGG" id="gme:Gmet_1180"/>
<dbReference type="eggNOG" id="COG1418">
    <property type="taxonomic scope" value="Bacteria"/>
</dbReference>
<dbReference type="HOGENOM" id="CLU_028328_1_0_7"/>
<dbReference type="Proteomes" id="UP000007073">
    <property type="component" value="Chromosome"/>
</dbReference>
<dbReference type="GO" id="GO:0005886">
    <property type="term" value="C:plasma membrane"/>
    <property type="evidence" value="ECO:0007669"/>
    <property type="project" value="UniProtKB-SubCell"/>
</dbReference>
<dbReference type="GO" id="GO:0003723">
    <property type="term" value="F:RNA binding"/>
    <property type="evidence" value="ECO:0007669"/>
    <property type="project" value="UniProtKB-UniRule"/>
</dbReference>
<dbReference type="GO" id="GO:0004521">
    <property type="term" value="F:RNA endonuclease activity"/>
    <property type="evidence" value="ECO:0007669"/>
    <property type="project" value="UniProtKB-UniRule"/>
</dbReference>
<dbReference type="GO" id="GO:0006402">
    <property type="term" value="P:mRNA catabolic process"/>
    <property type="evidence" value="ECO:0007669"/>
    <property type="project" value="UniProtKB-UniRule"/>
</dbReference>
<dbReference type="CDD" id="cd00077">
    <property type="entry name" value="HDc"/>
    <property type="match status" value="1"/>
</dbReference>
<dbReference type="CDD" id="cd22431">
    <property type="entry name" value="KH-I_RNaseY"/>
    <property type="match status" value="1"/>
</dbReference>
<dbReference type="FunFam" id="1.10.3210.10:FF:000022">
    <property type="entry name" value="Ribonuclease Y"/>
    <property type="match status" value="1"/>
</dbReference>
<dbReference type="Gene3D" id="1.10.3210.10">
    <property type="entry name" value="Hypothetical protein af1432"/>
    <property type="match status" value="1"/>
</dbReference>
<dbReference type="Gene3D" id="3.30.1370.10">
    <property type="entry name" value="K Homology domain, type 1"/>
    <property type="match status" value="1"/>
</dbReference>
<dbReference type="HAMAP" id="MF_00335">
    <property type="entry name" value="RNase_Y"/>
    <property type="match status" value="1"/>
</dbReference>
<dbReference type="InterPro" id="IPR003607">
    <property type="entry name" value="HD/PDEase_dom"/>
</dbReference>
<dbReference type="InterPro" id="IPR006674">
    <property type="entry name" value="HD_domain"/>
</dbReference>
<dbReference type="InterPro" id="IPR006675">
    <property type="entry name" value="HDIG_dom"/>
</dbReference>
<dbReference type="InterPro" id="IPR004087">
    <property type="entry name" value="KH_dom"/>
</dbReference>
<dbReference type="InterPro" id="IPR004088">
    <property type="entry name" value="KH_dom_type_1"/>
</dbReference>
<dbReference type="InterPro" id="IPR036612">
    <property type="entry name" value="KH_dom_type_1_sf"/>
</dbReference>
<dbReference type="InterPro" id="IPR017705">
    <property type="entry name" value="Ribonuclease_Y"/>
</dbReference>
<dbReference type="InterPro" id="IPR022711">
    <property type="entry name" value="RNase_Y_N"/>
</dbReference>
<dbReference type="NCBIfam" id="TIGR00277">
    <property type="entry name" value="HDIG"/>
    <property type="match status" value="1"/>
</dbReference>
<dbReference type="NCBIfam" id="TIGR03319">
    <property type="entry name" value="RNase_Y"/>
    <property type="match status" value="1"/>
</dbReference>
<dbReference type="PANTHER" id="PTHR12826">
    <property type="entry name" value="RIBONUCLEASE Y"/>
    <property type="match status" value="1"/>
</dbReference>
<dbReference type="PANTHER" id="PTHR12826:SF15">
    <property type="entry name" value="RIBONUCLEASE Y"/>
    <property type="match status" value="1"/>
</dbReference>
<dbReference type="Pfam" id="PF01966">
    <property type="entry name" value="HD"/>
    <property type="match status" value="1"/>
</dbReference>
<dbReference type="Pfam" id="PF00013">
    <property type="entry name" value="KH_1"/>
    <property type="match status" value="1"/>
</dbReference>
<dbReference type="Pfam" id="PF12072">
    <property type="entry name" value="RNase_Y_N"/>
    <property type="match status" value="1"/>
</dbReference>
<dbReference type="SMART" id="SM00471">
    <property type="entry name" value="HDc"/>
    <property type="match status" value="1"/>
</dbReference>
<dbReference type="SMART" id="SM00322">
    <property type="entry name" value="KH"/>
    <property type="match status" value="1"/>
</dbReference>
<dbReference type="SUPFAM" id="SSF54791">
    <property type="entry name" value="Eukaryotic type KH-domain (KH-domain type I)"/>
    <property type="match status" value="1"/>
</dbReference>
<dbReference type="SUPFAM" id="SSF109604">
    <property type="entry name" value="HD-domain/PDEase-like"/>
    <property type="match status" value="1"/>
</dbReference>
<dbReference type="PROSITE" id="PS51831">
    <property type="entry name" value="HD"/>
    <property type="match status" value="1"/>
</dbReference>
<dbReference type="PROSITE" id="PS50084">
    <property type="entry name" value="KH_TYPE_1"/>
    <property type="match status" value="1"/>
</dbReference>
<feature type="chain" id="PRO_0000344881" description="Ribonuclease Y">
    <location>
        <begin position="1"/>
        <end position="520"/>
    </location>
</feature>
<feature type="transmembrane region" description="Helical" evidence="1">
    <location>
        <begin position="3"/>
        <end position="23"/>
    </location>
</feature>
<feature type="domain" description="KH" evidence="1">
    <location>
        <begin position="210"/>
        <end position="273"/>
    </location>
</feature>
<feature type="domain" description="HD" evidence="2">
    <location>
        <begin position="336"/>
        <end position="429"/>
    </location>
</feature>
<comment type="function">
    <text evidence="1">Endoribonuclease that initiates mRNA decay.</text>
</comment>
<comment type="subcellular location">
    <subcellularLocation>
        <location evidence="1">Cell membrane</location>
        <topology evidence="1">Single-pass membrane protein</topology>
    </subcellularLocation>
</comment>
<comment type="similarity">
    <text evidence="1">Belongs to the RNase Y family.</text>
</comment>
<gene>
    <name evidence="1" type="primary">rny</name>
    <name type="ordered locus">Gmet_1180</name>
</gene>
<sequence>MKIEIAIVLILAAAGLGYFVGNMLRKRISDTLVSKAEELASKIVDDAKREAETITKEAELKAKDEVFQAKAEAERDAKEKRKDLQALEKRLQQKEENLDKKMNLFDQRDADLTKKDQALLNREQGLVQKEERLDGLIAEQREKLESISGLSSTEAKKILMDAMESEAKLDAAKRIKVIEEEARETADKKSKEIMALAIQRYAGEYVAERSVSVVALPSDEMKGRIIGREGRNIRALEAATGIDLIIDDTPEAVILSGFNPVRREVAKIALEKLITDGRIHPGRIEEVVAKAEEEVEQTIKEAGDQAAFDLGVHGIHPEILKLIGRLKYRTSYSQNVYQHSLEVAFLCGIMASELGINVKQAKRAGLLHDLGKAVDHEVEGSHAVIGAELARKYGESPKIVHAIMAHHEDEKPNTVLAVLVQAADALSGARPGARREMMETYVKRLDDLERIATSFVGVNNSFAIQAGREIRVMVSSDEVTDERAVVLAKDIAKKIEAEMTYPGQIKVNVIRETRAIEYAR</sequence>
<name>RNY_GEOMG</name>
<keyword id="KW-1003">Cell membrane</keyword>
<keyword id="KW-0255">Endonuclease</keyword>
<keyword id="KW-0378">Hydrolase</keyword>
<keyword id="KW-0472">Membrane</keyword>
<keyword id="KW-0540">Nuclease</keyword>
<keyword id="KW-1185">Reference proteome</keyword>
<keyword id="KW-0694">RNA-binding</keyword>
<keyword id="KW-0812">Transmembrane</keyword>
<keyword id="KW-1133">Transmembrane helix</keyword>
<accession>Q39WF6</accession>
<evidence type="ECO:0000255" key="1">
    <source>
        <dbReference type="HAMAP-Rule" id="MF_00335"/>
    </source>
</evidence>
<evidence type="ECO:0000255" key="2">
    <source>
        <dbReference type="PROSITE-ProRule" id="PRU01175"/>
    </source>
</evidence>
<reference key="1">
    <citation type="journal article" date="2009" name="BMC Microbiol.">
        <title>The genome sequence of Geobacter metallireducens: features of metabolism, physiology and regulation common and dissimilar to Geobacter sulfurreducens.</title>
        <authorList>
            <person name="Aklujkar M."/>
            <person name="Krushkal J."/>
            <person name="DiBartolo G."/>
            <person name="Lapidus A."/>
            <person name="Land M.L."/>
            <person name="Lovley D.R."/>
        </authorList>
    </citation>
    <scope>NUCLEOTIDE SEQUENCE [LARGE SCALE GENOMIC DNA]</scope>
    <source>
        <strain>ATCC 53774 / DSM 7210 / GS-15</strain>
    </source>
</reference>